<accession>Q64XV7</accession>
<evidence type="ECO:0000255" key="1">
    <source>
        <dbReference type="HAMAP-Rule" id="MF_00137"/>
    </source>
</evidence>
<comment type="catalytic activity">
    <reaction evidence="1">
        <text>5-amino-1-(5-phospho-D-ribosyl)imidazole-4-carboxylate + L-aspartate + ATP = (2S)-2-[5-amino-1-(5-phospho-beta-D-ribosyl)imidazole-4-carboxamido]succinate + ADP + phosphate + 2 H(+)</text>
        <dbReference type="Rhea" id="RHEA:22628"/>
        <dbReference type="ChEBI" id="CHEBI:15378"/>
        <dbReference type="ChEBI" id="CHEBI:29991"/>
        <dbReference type="ChEBI" id="CHEBI:30616"/>
        <dbReference type="ChEBI" id="CHEBI:43474"/>
        <dbReference type="ChEBI" id="CHEBI:58443"/>
        <dbReference type="ChEBI" id="CHEBI:77657"/>
        <dbReference type="ChEBI" id="CHEBI:456216"/>
        <dbReference type="EC" id="6.3.2.6"/>
    </reaction>
</comment>
<comment type="pathway">
    <text evidence="1">Purine metabolism; IMP biosynthesis via de novo pathway; 5-amino-1-(5-phospho-D-ribosyl)imidazole-4-carboxamide from 5-amino-1-(5-phospho-D-ribosyl)imidazole-4-carboxylate: step 1/2.</text>
</comment>
<comment type="similarity">
    <text evidence="1">Belongs to the SAICAR synthetase family.</text>
</comment>
<proteinExistence type="inferred from homology"/>
<keyword id="KW-0067">ATP-binding</keyword>
<keyword id="KW-0436">Ligase</keyword>
<keyword id="KW-0547">Nucleotide-binding</keyword>
<keyword id="KW-0658">Purine biosynthesis</keyword>
<protein>
    <recommendedName>
        <fullName evidence="1">Phosphoribosylaminoimidazole-succinocarboxamide synthase</fullName>
        <ecNumber evidence="1">6.3.2.6</ecNumber>
    </recommendedName>
    <alternativeName>
        <fullName evidence="1">SAICAR synthetase</fullName>
    </alternativeName>
</protein>
<dbReference type="EC" id="6.3.2.6" evidence="1"/>
<dbReference type="EMBL" id="AP006841">
    <property type="protein sequence ID" value="BAD47669.1"/>
    <property type="molecule type" value="Genomic_DNA"/>
</dbReference>
<dbReference type="RefSeq" id="WP_005785154.1">
    <property type="nucleotide sequence ID" value="NZ_UYXF01000001.1"/>
</dbReference>
<dbReference type="RefSeq" id="YP_098203.1">
    <property type="nucleotide sequence ID" value="NC_006347.1"/>
</dbReference>
<dbReference type="SMR" id="Q64XV7"/>
<dbReference type="STRING" id="295405.BF0918"/>
<dbReference type="KEGG" id="bfr:BF0918"/>
<dbReference type="PATRIC" id="fig|295405.11.peg.921"/>
<dbReference type="HOGENOM" id="CLU_045637_0_1_10"/>
<dbReference type="OrthoDB" id="9801549at2"/>
<dbReference type="UniPathway" id="UPA00074">
    <property type="reaction ID" value="UER00131"/>
</dbReference>
<dbReference type="Proteomes" id="UP000002197">
    <property type="component" value="Chromosome"/>
</dbReference>
<dbReference type="GO" id="GO:0005737">
    <property type="term" value="C:cytoplasm"/>
    <property type="evidence" value="ECO:0007669"/>
    <property type="project" value="TreeGrafter"/>
</dbReference>
<dbReference type="GO" id="GO:0005524">
    <property type="term" value="F:ATP binding"/>
    <property type="evidence" value="ECO:0007669"/>
    <property type="project" value="UniProtKB-KW"/>
</dbReference>
<dbReference type="GO" id="GO:0004639">
    <property type="term" value="F:phosphoribosylaminoimidazolesuccinocarboxamide synthase activity"/>
    <property type="evidence" value="ECO:0007669"/>
    <property type="project" value="UniProtKB-UniRule"/>
</dbReference>
<dbReference type="GO" id="GO:0006189">
    <property type="term" value="P:'de novo' IMP biosynthetic process"/>
    <property type="evidence" value="ECO:0007669"/>
    <property type="project" value="UniProtKB-UniRule"/>
</dbReference>
<dbReference type="CDD" id="cd01414">
    <property type="entry name" value="SAICAR_synt_Sc"/>
    <property type="match status" value="1"/>
</dbReference>
<dbReference type="FunFam" id="3.30.200.20:FF:000199">
    <property type="entry name" value="Phosphoribosylaminoimidazole-succinocarboxamide synthase"/>
    <property type="match status" value="1"/>
</dbReference>
<dbReference type="FunFam" id="3.30.470.20:FF:000015">
    <property type="entry name" value="Phosphoribosylaminoimidazole-succinocarboxamide synthase"/>
    <property type="match status" value="1"/>
</dbReference>
<dbReference type="Gene3D" id="3.30.470.20">
    <property type="entry name" value="ATP-grasp fold, B domain"/>
    <property type="match status" value="1"/>
</dbReference>
<dbReference type="Gene3D" id="3.30.200.20">
    <property type="entry name" value="Phosphorylase Kinase, domain 1"/>
    <property type="match status" value="1"/>
</dbReference>
<dbReference type="HAMAP" id="MF_00137">
    <property type="entry name" value="SAICAR_synth"/>
    <property type="match status" value="1"/>
</dbReference>
<dbReference type="InterPro" id="IPR028923">
    <property type="entry name" value="SAICAR_synt/ADE2_N"/>
</dbReference>
<dbReference type="InterPro" id="IPR018236">
    <property type="entry name" value="SAICAR_synthetase_CS"/>
</dbReference>
<dbReference type="NCBIfam" id="NF009251">
    <property type="entry name" value="PRK12607.1"/>
    <property type="match status" value="1"/>
</dbReference>
<dbReference type="NCBIfam" id="NF010568">
    <property type="entry name" value="PRK13961.1"/>
    <property type="match status" value="1"/>
</dbReference>
<dbReference type="PANTHER" id="PTHR43700">
    <property type="entry name" value="PHOSPHORIBOSYLAMINOIMIDAZOLE-SUCCINOCARBOXAMIDE SYNTHASE"/>
    <property type="match status" value="1"/>
</dbReference>
<dbReference type="PANTHER" id="PTHR43700:SF1">
    <property type="entry name" value="PHOSPHORIBOSYLAMINOIMIDAZOLE-SUCCINOCARBOXAMIDE SYNTHASE"/>
    <property type="match status" value="1"/>
</dbReference>
<dbReference type="Pfam" id="PF01259">
    <property type="entry name" value="SAICAR_synt"/>
    <property type="match status" value="1"/>
</dbReference>
<dbReference type="SUPFAM" id="SSF56104">
    <property type="entry name" value="SAICAR synthase-like"/>
    <property type="match status" value="1"/>
</dbReference>
<dbReference type="PROSITE" id="PS01058">
    <property type="entry name" value="SAICAR_SYNTHETASE_2"/>
    <property type="match status" value="1"/>
</dbReference>
<feature type="chain" id="PRO_1000018668" description="Phosphoribosylaminoimidazole-succinocarboxamide synthase">
    <location>
        <begin position="1"/>
        <end position="314"/>
    </location>
</feature>
<organism>
    <name type="scientific">Bacteroides fragilis (strain YCH46)</name>
    <dbReference type="NCBI Taxonomy" id="295405"/>
    <lineage>
        <taxon>Bacteria</taxon>
        <taxon>Pseudomonadati</taxon>
        <taxon>Bacteroidota</taxon>
        <taxon>Bacteroidia</taxon>
        <taxon>Bacteroidales</taxon>
        <taxon>Bacteroidaceae</taxon>
        <taxon>Bacteroides</taxon>
    </lineage>
</organism>
<name>PUR7_BACFR</name>
<gene>
    <name evidence="1" type="primary">purC</name>
    <name type="ordered locus">BF0918</name>
</gene>
<sequence>MKALTKTDFNFPGQKSVYHGKVRDVYNINGEQLVMVATDRISAFDVVLPEGIPYKGQMLNQIAAKFLDATTDICPNWKLATPDPMVTVGVLCEGFPVEMIVRGYLCGSAWRAYKNGVREICGVKLPEGMKENQKFPEPIVTPTTKAEMGLHDEDISKEEILAQGLATPEEYAILEKYTLALFKRGTEIAAERGLILVDTKYEFGKHNGTIYLMDEIHTPDSSRYFYAEGYQERFEKGEAQKQLSKEFVREWLMENGFQGKEGQKVPEMTPAIVESISERYIELFENITGEKFVKEDTSNIAERIEKNVMAFLAK</sequence>
<reference key="1">
    <citation type="journal article" date="2004" name="Proc. Natl. Acad. Sci. U.S.A.">
        <title>Genomic analysis of Bacteroides fragilis reveals extensive DNA inversions regulating cell surface adaptation.</title>
        <authorList>
            <person name="Kuwahara T."/>
            <person name="Yamashita A."/>
            <person name="Hirakawa H."/>
            <person name="Nakayama H."/>
            <person name="Toh H."/>
            <person name="Okada N."/>
            <person name="Kuhara S."/>
            <person name="Hattori M."/>
            <person name="Hayashi T."/>
            <person name="Ohnishi Y."/>
        </authorList>
    </citation>
    <scope>NUCLEOTIDE SEQUENCE [LARGE SCALE GENOMIC DNA]</scope>
    <source>
        <strain>YCH46</strain>
    </source>
</reference>